<reference key="1">
    <citation type="submission" date="2009-07" db="EMBL/GenBank/DDBJ databases">
        <title>Complete sequence of Pectobacterium carotovorum subsp. carotovorum PC1.</title>
        <authorList>
            <consortium name="US DOE Joint Genome Institute"/>
            <person name="Lucas S."/>
            <person name="Copeland A."/>
            <person name="Lapidus A."/>
            <person name="Glavina del Rio T."/>
            <person name="Tice H."/>
            <person name="Bruce D."/>
            <person name="Goodwin L."/>
            <person name="Pitluck S."/>
            <person name="Munk A.C."/>
            <person name="Brettin T."/>
            <person name="Detter J.C."/>
            <person name="Han C."/>
            <person name="Tapia R."/>
            <person name="Larimer F."/>
            <person name="Land M."/>
            <person name="Hauser L."/>
            <person name="Kyrpides N."/>
            <person name="Mikhailova N."/>
            <person name="Balakrishnan V."/>
            <person name="Glasner J."/>
            <person name="Perna N.T."/>
        </authorList>
    </citation>
    <scope>NUCLEOTIDE SEQUENCE [LARGE SCALE GENOMIC DNA]</scope>
    <source>
        <strain>PC1</strain>
    </source>
</reference>
<sequence>MSSIKLIVGLANPGAEYAATRHNAGAWFVDRLADAYRQPLKEESKFFGYTSRLNLAGQDVRLLVPTTFMNLSGKAVAAMATFYRIQPDEILVAHDELDLLPGIAKLKLGGGHGGHNGLKDIISKLGNNPNFHRLRIGIGHPGDKSKVTGFVLGKPPTSEQTLIDDAIDEAVRCTEILMKEDMIKAMNRLHAFKPA</sequence>
<keyword id="KW-0963">Cytoplasm</keyword>
<keyword id="KW-0378">Hydrolase</keyword>
<keyword id="KW-0694">RNA-binding</keyword>
<keyword id="KW-0820">tRNA-binding</keyword>
<dbReference type="EC" id="3.1.1.29" evidence="1"/>
<dbReference type="EMBL" id="CP001657">
    <property type="protein sequence ID" value="ACT13160.1"/>
    <property type="molecule type" value="Genomic_DNA"/>
</dbReference>
<dbReference type="RefSeq" id="WP_015840350.1">
    <property type="nucleotide sequence ID" value="NC_012917.1"/>
</dbReference>
<dbReference type="SMR" id="C6DHY7"/>
<dbReference type="STRING" id="561230.PC1_2120"/>
<dbReference type="GeneID" id="67794110"/>
<dbReference type="KEGG" id="pct:PC1_2120"/>
<dbReference type="eggNOG" id="COG0193">
    <property type="taxonomic scope" value="Bacteria"/>
</dbReference>
<dbReference type="HOGENOM" id="CLU_062456_3_1_6"/>
<dbReference type="OrthoDB" id="9800507at2"/>
<dbReference type="Proteomes" id="UP000002736">
    <property type="component" value="Chromosome"/>
</dbReference>
<dbReference type="GO" id="GO:0005737">
    <property type="term" value="C:cytoplasm"/>
    <property type="evidence" value="ECO:0007669"/>
    <property type="project" value="UniProtKB-SubCell"/>
</dbReference>
<dbReference type="GO" id="GO:0004045">
    <property type="term" value="F:peptidyl-tRNA hydrolase activity"/>
    <property type="evidence" value="ECO:0007669"/>
    <property type="project" value="UniProtKB-UniRule"/>
</dbReference>
<dbReference type="GO" id="GO:0000049">
    <property type="term" value="F:tRNA binding"/>
    <property type="evidence" value="ECO:0007669"/>
    <property type="project" value="UniProtKB-UniRule"/>
</dbReference>
<dbReference type="GO" id="GO:0006515">
    <property type="term" value="P:protein quality control for misfolded or incompletely synthesized proteins"/>
    <property type="evidence" value="ECO:0007669"/>
    <property type="project" value="UniProtKB-UniRule"/>
</dbReference>
<dbReference type="GO" id="GO:0072344">
    <property type="term" value="P:rescue of stalled ribosome"/>
    <property type="evidence" value="ECO:0007669"/>
    <property type="project" value="UniProtKB-UniRule"/>
</dbReference>
<dbReference type="CDD" id="cd00462">
    <property type="entry name" value="PTH"/>
    <property type="match status" value="1"/>
</dbReference>
<dbReference type="FunFam" id="3.40.50.1470:FF:000001">
    <property type="entry name" value="Peptidyl-tRNA hydrolase"/>
    <property type="match status" value="1"/>
</dbReference>
<dbReference type="Gene3D" id="3.40.50.1470">
    <property type="entry name" value="Peptidyl-tRNA hydrolase"/>
    <property type="match status" value="1"/>
</dbReference>
<dbReference type="HAMAP" id="MF_00083">
    <property type="entry name" value="Pept_tRNA_hydro_bact"/>
    <property type="match status" value="1"/>
</dbReference>
<dbReference type="InterPro" id="IPR001328">
    <property type="entry name" value="Pept_tRNA_hydro"/>
</dbReference>
<dbReference type="InterPro" id="IPR018171">
    <property type="entry name" value="Pept_tRNA_hydro_CS"/>
</dbReference>
<dbReference type="InterPro" id="IPR036416">
    <property type="entry name" value="Pept_tRNA_hydro_sf"/>
</dbReference>
<dbReference type="NCBIfam" id="TIGR00447">
    <property type="entry name" value="pth"/>
    <property type="match status" value="1"/>
</dbReference>
<dbReference type="PANTHER" id="PTHR17224">
    <property type="entry name" value="PEPTIDYL-TRNA HYDROLASE"/>
    <property type="match status" value="1"/>
</dbReference>
<dbReference type="PANTHER" id="PTHR17224:SF1">
    <property type="entry name" value="PEPTIDYL-TRNA HYDROLASE"/>
    <property type="match status" value="1"/>
</dbReference>
<dbReference type="Pfam" id="PF01195">
    <property type="entry name" value="Pept_tRNA_hydro"/>
    <property type="match status" value="1"/>
</dbReference>
<dbReference type="SUPFAM" id="SSF53178">
    <property type="entry name" value="Peptidyl-tRNA hydrolase-like"/>
    <property type="match status" value="1"/>
</dbReference>
<dbReference type="PROSITE" id="PS01195">
    <property type="entry name" value="PEPT_TRNA_HYDROL_1"/>
    <property type="match status" value="1"/>
</dbReference>
<dbReference type="PROSITE" id="PS01196">
    <property type="entry name" value="PEPT_TRNA_HYDROL_2"/>
    <property type="match status" value="1"/>
</dbReference>
<proteinExistence type="inferred from homology"/>
<protein>
    <recommendedName>
        <fullName evidence="1">Peptidyl-tRNA hydrolase</fullName>
        <shortName evidence="1">Pth</shortName>
        <ecNumber evidence="1">3.1.1.29</ecNumber>
    </recommendedName>
</protein>
<accession>C6DHY7</accession>
<organism>
    <name type="scientific">Pectobacterium carotovorum subsp. carotovorum (strain PC1)</name>
    <dbReference type="NCBI Taxonomy" id="561230"/>
    <lineage>
        <taxon>Bacteria</taxon>
        <taxon>Pseudomonadati</taxon>
        <taxon>Pseudomonadota</taxon>
        <taxon>Gammaproteobacteria</taxon>
        <taxon>Enterobacterales</taxon>
        <taxon>Pectobacteriaceae</taxon>
        <taxon>Pectobacterium</taxon>
    </lineage>
</organism>
<name>PTH_PECCP</name>
<gene>
    <name evidence="1" type="primary">pth</name>
    <name type="ordered locus">PC1_2120</name>
</gene>
<evidence type="ECO:0000255" key="1">
    <source>
        <dbReference type="HAMAP-Rule" id="MF_00083"/>
    </source>
</evidence>
<comment type="function">
    <text evidence="1">Hydrolyzes ribosome-free peptidyl-tRNAs (with 1 or more amino acids incorporated), which drop off the ribosome during protein synthesis, or as a result of ribosome stalling.</text>
</comment>
<comment type="function">
    <text evidence="1">Catalyzes the release of premature peptidyl moieties from peptidyl-tRNA molecules trapped in stalled 50S ribosomal subunits, and thus maintains levels of free tRNAs and 50S ribosomes.</text>
</comment>
<comment type="catalytic activity">
    <reaction evidence="1">
        <text>an N-acyl-L-alpha-aminoacyl-tRNA + H2O = an N-acyl-L-amino acid + a tRNA + H(+)</text>
        <dbReference type="Rhea" id="RHEA:54448"/>
        <dbReference type="Rhea" id="RHEA-COMP:10123"/>
        <dbReference type="Rhea" id="RHEA-COMP:13883"/>
        <dbReference type="ChEBI" id="CHEBI:15377"/>
        <dbReference type="ChEBI" id="CHEBI:15378"/>
        <dbReference type="ChEBI" id="CHEBI:59874"/>
        <dbReference type="ChEBI" id="CHEBI:78442"/>
        <dbReference type="ChEBI" id="CHEBI:138191"/>
        <dbReference type="EC" id="3.1.1.29"/>
    </reaction>
</comment>
<comment type="subunit">
    <text evidence="1">Monomer.</text>
</comment>
<comment type="subcellular location">
    <subcellularLocation>
        <location evidence="1">Cytoplasm</location>
    </subcellularLocation>
</comment>
<comment type="similarity">
    <text evidence="1">Belongs to the PTH family.</text>
</comment>
<feature type="chain" id="PRO_1000202592" description="Peptidyl-tRNA hydrolase">
    <location>
        <begin position="1"/>
        <end position="195"/>
    </location>
</feature>
<feature type="active site" description="Proton acceptor" evidence="1">
    <location>
        <position position="22"/>
    </location>
</feature>
<feature type="binding site" evidence="1">
    <location>
        <position position="17"/>
    </location>
    <ligand>
        <name>tRNA</name>
        <dbReference type="ChEBI" id="CHEBI:17843"/>
    </ligand>
</feature>
<feature type="binding site" evidence="1">
    <location>
        <position position="68"/>
    </location>
    <ligand>
        <name>tRNA</name>
        <dbReference type="ChEBI" id="CHEBI:17843"/>
    </ligand>
</feature>
<feature type="binding site" evidence="1">
    <location>
        <position position="70"/>
    </location>
    <ligand>
        <name>tRNA</name>
        <dbReference type="ChEBI" id="CHEBI:17843"/>
    </ligand>
</feature>
<feature type="binding site" evidence="1">
    <location>
        <position position="116"/>
    </location>
    <ligand>
        <name>tRNA</name>
        <dbReference type="ChEBI" id="CHEBI:17843"/>
    </ligand>
</feature>
<feature type="site" description="Discriminates between blocked and unblocked aminoacyl-tRNA" evidence="1">
    <location>
        <position position="12"/>
    </location>
</feature>
<feature type="site" description="Stabilizes the basic form of H active site to accept a proton" evidence="1">
    <location>
        <position position="95"/>
    </location>
</feature>